<keyword id="KW-0156">Chromatin regulator</keyword>
<keyword id="KW-0158">Chromosome</keyword>
<keyword id="KW-0963">Cytoplasm</keyword>
<keyword id="KW-0509">mRNA transport</keyword>
<keyword id="KW-0539">Nucleus</keyword>
<keyword id="KW-1185">Reference proteome</keyword>
<keyword id="KW-0677">Repeat</keyword>
<keyword id="KW-0694">RNA-binding</keyword>
<keyword id="KW-0779">Telomere</keyword>
<keyword id="KW-0810">Translation regulation</keyword>
<keyword id="KW-0813">Transport</keyword>
<feature type="chain" id="PRO_0000408189" description="Heterogeneous nuclear rnp K-like protein 2">
    <location>
        <begin position="1"/>
        <end position="383"/>
    </location>
</feature>
<feature type="domain" description="KH 1" evidence="2">
    <location>
        <begin position="58"/>
        <end position="122"/>
    </location>
</feature>
<feature type="domain" description="KH 2" evidence="2">
    <location>
        <begin position="161"/>
        <end position="226"/>
    </location>
</feature>
<feature type="domain" description="KH 3" evidence="2">
    <location>
        <begin position="256"/>
        <end position="321"/>
    </location>
</feature>
<feature type="region of interest" description="Disordered" evidence="3">
    <location>
        <begin position="332"/>
        <end position="383"/>
    </location>
</feature>
<feature type="compositionally biased region" description="Low complexity" evidence="3">
    <location>
        <begin position="343"/>
        <end position="362"/>
    </location>
</feature>
<feature type="compositionally biased region" description="Polar residues" evidence="3">
    <location>
        <begin position="363"/>
        <end position="376"/>
    </location>
</feature>
<dbReference type="EMBL" id="CR382125">
    <property type="protein sequence ID" value="CAG99590.1"/>
    <property type="molecule type" value="Genomic_DNA"/>
</dbReference>
<dbReference type="RefSeq" id="XP_454503.1">
    <property type="nucleotide sequence ID" value="XM_454503.1"/>
</dbReference>
<dbReference type="SMR" id="Q6CNI6"/>
<dbReference type="FunCoup" id="Q6CNI6">
    <property type="interactions" value="267"/>
</dbReference>
<dbReference type="STRING" id="284590.Q6CNI6"/>
<dbReference type="PaxDb" id="284590-Q6CNI6"/>
<dbReference type="KEGG" id="kla:KLLA0_E12321g"/>
<dbReference type="eggNOG" id="KOG2190">
    <property type="taxonomic scope" value="Eukaryota"/>
</dbReference>
<dbReference type="HOGENOM" id="CLU_022670_2_0_1"/>
<dbReference type="InParanoid" id="Q6CNI6"/>
<dbReference type="OMA" id="TERSYFP"/>
<dbReference type="Proteomes" id="UP000000598">
    <property type="component" value="Chromosome E"/>
</dbReference>
<dbReference type="GO" id="GO:0000781">
    <property type="term" value="C:chromosome, telomeric region"/>
    <property type="evidence" value="ECO:0007669"/>
    <property type="project" value="UniProtKB-SubCell"/>
</dbReference>
<dbReference type="GO" id="GO:0005634">
    <property type="term" value="C:nucleus"/>
    <property type="evidence" value="ECO:0007669"/>
    <property type="project" value="UniProtKB-SubCell"/>
</dbReference>
<dbReference type="GO" id="GO:0000932">
    <property type="term" value="C:P-body"/>
    <property type="evidence" value="ECO:0007669"/>
    <property type="project" value="UniProtKB-SubCell"/>
</dbReference>
<dbReference type="GO" id="GO:0003723">
    <property type="term" value="F:RNA binding"/>
    <property type="evidence" value="ECO:0007669"/>
    <property type="project" value="UniProtKB-KW"/>
</dbReference>
<dbReference type="GO" id="GO:0006325">
    <property type="term" value="P:chromatin organization"/>
    <property type="evidence" value="ECO:0007669"/>
    <property type="project" value="UniProtKB-KW"/>
</dbReference>
<dbReference type="GO" id="GO:0051028">
    <property type="term" value="P:mRNA transport"/>
    <property type="evidence" value="ECO:0007669"/>
    <property type="project" value="UniProtKB-KW"/>
</dbReference>
<dbReference type="GO" id="GO:0006417">
    <property type="term" value="P:regulation of translation"/>
    <property type="evidence" value="ECO:0007669"/>
    <property type="project" value="UniProtKB-KW"/>
</dbReference>
<dbReference type="CDD" id="cd00105">
    <property type="entry name" value="KH-I"/>
    <property type="match status" value="1"/>
</dbReference>
<dbReference type="Gene3D" id="3.30.1370.10">
    <property type="entry name" value="K Homology domain, type 1"/>
    <property type="match status" value="3"/>
</dbReference>
<dbReference type="InterPro" id="IPR004087">
    <property type="entry name" value="KH_dom"/>
</dbReference>
<dbReference type="InterPro" id="IPR004088">
    <property type="entry name" value="KH_dom_type_1"/>
</dbReference>
<dbReference type="InterPro" id="IPR036612">
    <property type="entry name" value="KH_dom_type_1_sf"/>
</dbReference>
<dbReference type="PANTHER" id="PTHR10288">
    <property type="entry name" value="KH DOMAIN CONTAINING RNA BINDING PROTEIN"/>
    <property type="match status" value="1"/>
</dbReference>
<dbReference type="Pfam" id="PF00013">
    <property type="entry name" value="KH_1"/>
    <property type="match status" value="3"/>
</dbReference>
<dbReference type="SMART" id="SM00322">
    <property type="entry name" value="KH"/>
    <property type="match status" value="3"/>
</dbReference>
<dbReference type="SUPFAM" id="SSF54791">
    <property type="entry name" value="Eukaryotic type KH-domain (KH-domain type I)"/>
    <property type="match status" value="3"/>
</dbReference>
<dbReference type="PROSITE" id="PS50084">
    <property type="entry name" value="KH_TYPE_1"/>
    <property type="match status" value="3"/>
</dbReference>
<organism>
    <name type="scientific">Kluyveromyces lactis (strain ATCC 8585 / CBS 2359 / DSM 70799 / NBRC 1267 / NRRL Y-1140 / WM37)</name>
    <name type="common">Yeast</name>
    <name type="synonym">Candida sphaerica</name>
    <dbReference type="NCBI Taxonomy" id="284590"/>
    <lineage>
        <taxon>Eukaryota</taxon>
        <taxon>Fungi</taxon>
        <taxon>Dikarya</taxon>
        <taxon>Ascomycota</taxon>
        <taxon>Saccharomycotina</taxon>
        <taxon>Saccharomycetes</taxon>
        <taxon>Saccharomycetales</taxon>
        <taxon>Saccharomycetaceae</taxon>
        <taxon>Kluyveromyces</taxon>
    </lineage>
</organism>
<name>HEK2_KLULA</name>
<sequence length="383" mass="42140">MSSSADNSNNSSSRFPAAVDSINNNSNSINDASQFHNSYNEVNEINNDTNSQVNNGNNITFHVLVSLKEAAKIIGPQGNTIETIRRENDIKIGISPREKSCSDRLLNVSGPPRQVANSLGQVLRVLTTDYEPEEHVFKHLRFMLPPASKEEIEDPEKWKQIGNLRLICTNPQISSVIGQQGAKIKKLIETHTVKLVASKHFLPDSKDRVLEIQGFPTSVANCINEIAELFIQDDVHVPPRTLPRYYPHSKHTKEIQVSQTLAIPKEFVGALLGVGGNRIANLRKFTKTKIVIGQDPTENGDRIFTVWGNDQKSVKLAQTMLLKNLEVEKKRREEHEASLKDGSSVPAAAAASAATSISASGANQNDSIHTPVSDNESPVVFTE</sequence>
<proteinExistence type="inferred from homology"/>
<reference key="1">
    <citation type="journal article" date="2004" name="Nature">
        <title>Genome evolution in yeasts.</title>
        <authorList>
            <person name="Dujon B."/>
            <person name="Sherman D."/>
            <person name="Fischer G."/>
            <person name="Durrens P."/>
            <person name="Casaregola S."/>
            <person name="Lafontaine I."/>
            <person name="de Montigny J."/>
            <person name="Marck C."/>
            <person name="Neuveglise C."/>
            <person name="Talla E."/>
            <person name="Goffard N."/>
            <person name="Frangeul L."/>
            <person name="Aigle M."/>
            <person name="Anthouard V."/>
            <person name="Babour A."/>
            <person name="Barbe V."/>
            <person name="Barnay S."/>
            <person name="Blanchin S."/>
            <person name="Beckerich J.-M."/>
            <person name="Beyne E."/>
            <person name="Bleykasten C."/>
            <person name="Boisrame A."/>
            <person name="Boyer J."/>
            <person name="Cattolico L."/>
            <person name="Confanioleri F."/>
            <person name="de Daruvar A."/>
            <person name="Despons L."/>
            <person name="Fabre E."/>
            <person name="Fairhead C."/>
            <person name="Ferry-Dumazet H."/>
            <person name="Groppi A."/>
            <person name="Hantraye F."/>
            <person name="Hennequin C."/>
            <person name="Jauniaux N."/>
            <person name="Joyet P."/>
            <person name="Kachouri R."/>
            <person name="Kerrest A."/>
            <person name="Koszul R."/>
            <person name="Lemaire M."/>
            <person name="Lesur I."/>
            <person name="Ma L."/>
            <person name="Muller H."/>
            <person name="Nicaud J.-M."/>
            <person name="Nikolski M."/>
            <person name="Oztas S."/>
            <person name="Ozier-Kalogeropoulos O."/>
            <person name="Pellenz S."/>
            <person name="Potier S."/>
            <person name="Richard G.-F."/>
            <person name="Straub M.-L."/>
            <person name="Suleau A."/>
            <person name="Swennen D."/>
            <person name="Tekaia F."/>
            <person name="Wesolowski-Louvel M."/>
            <person name="Westhof E."/>
            <person name="Wirth B."/>
            <person name="Zeniou-Meyer M."/>
            <person name="Zivanovic Y."/>
            <person name="Bolotin-Fukuhara M."/>
            <person name="Thierry A."/>
            <person name="Bouchier C."/>
            <person name="Caudron B."/>
            <person name="Scarpelli C."/>
            <person name="Gaillardin C."/>
            <person name="Weissenbach J."/>
            <person name="Wincker P."/>
            <person name="Souciet J.-L."/>
        </authorList>
    </citation>
    <scope>NUCLEOTIDE SEQUENCE [LARGE SCALE GENOMIC DNA]</scope>
    <source>
        <strain>ATCC 8585 / CBS 2359 / DSM 70799 / NBRC 1267 / NRRL Y-1140 / WM37</strain>
    </source>
</reference>
<comment type="function">
    <text evidence="1">RNA-binding protein involved in the correct localization of transcripts in the cell. RNA localization is a widespread mechanism for achieving localized protein synthesis. Involved in structural and functional organization of telomeric chromatin and regulates silencing at the HMR locus (By similarity).</text>
</comment>
<comment type="subunit">
    <text evidence="1">Binds RNA.</text>
</comment>
<comment type="subcellular location">
    <subcellularLocation>
        <location evidence="1">Cytoplasm</location>
    </subcellularLocation>
    <subcellularLocation>
        <location evidence="1">Cytoplasm</location>
        <location evidence="1">P-body</location>
    </subcellularLocation>
    <subcellularLocation>
        <location evidence="1">Nucleus</location>
    </subcellularLocation>
    <subcellularLocation>
        <location evidence="1">Chromosome</location>
        <location evidence="1">Telomere</location>
    </subcellularLocation>
</comment>
<comment type="similarity">
    <text evidence="4">Belongs to the HEK2 family.</text>
</comment>
<accession>Q6CNI6</accession>
<evidence type="ECO:0000250" key="1"/>
<evidence type="ECO:0000255" key="2">
    <source>
        <dbReference type="PROSITE-ProRule" id="PRU00117"/>
    </source>
</evidence>
<evidence type="ECO:0000256" key="3">
    <source>
        <dbReference type="SAM" id="MobiDB-lite"/>
    </source>
</evidence>
<evidence type="ECO:0000305" key="4"/>
<gene>
    <name type="primary">HEK2</name>
    <name type="synonym">KHD1</name>
    <name type="ordered locus">KLLA0E12321g</name>
</gene>
<protein>
    <recommendedName>
        <fullName>Heterogeneous nuclear rnp K-like protein 2</fullName>
    </recommendedName>
    <alternativeName>
        <fullName>KH domain-containing protein 1</fullName>
    </alternativeName>
</protein>